<feature type="transit peptide" description="Chloroplast" evidence="1">
    <location>
        <begin position="1"/>
        <end status="unknown"/>
    </location>
</feature>
<feature type="chain" id="PRO_0000005503" description="ATP-dependent Clp protease ATP-binding subunit ClpA homolog CD4B, chloroplastic">
    <location>
        <begin status="unknown"/>
        <end position="923"/>
    </location>
</feature>
<feature type="domain" description="Clp R" evidence="3">
    <location>
        <begin position="92"/>
        <end position="234"/>
    </location>
</feature>
<feature type="domain" description="UVR" evidence="2">
    <location>
        <begin position="509"/>
        <end position="544"/>
    </location>
</feature>
<feature type="region of interest" description="Repeat 1" evidence="3">
    <location>
        <begin position="95"/>
        <end position="160"/>
    </location>
</feature>
<feature type="region of interest" description="Repeat 2" evidence="3">
    <location>
        <begin position="170"/>
        <end position="234"/>
    </location>
</feature>
<feature type="region of interest" description="I">
    <location>
        <begin position="255"/>
        <end position="502"/>
    </location>
</feature>
<feature type="region of interest" description="II">
    <location>
        <begin position="569"/>
        <end position="760"/>
    </location>
</feature>
<feature type="binding site" evidence="1">
    <location>
        <begin position="300"/>
        <end position="307"/>
    </location>
    <ligand>
        <name>ATP</name>
        <dbReference type="ChEBI" id="CHEBI:30616"/>
    </ligand>
</feature>
<feature type="binding site" evidence="1">
    <location>
        <begin position="643"/>
        <end position="650"/>
    </location>
    <ligand>
        <name>ATP</name>
        <dbReference type="ChEBI" id="CHEBI:30616"/>
    </ligand>
</feature>
<accession>P31542</accession>
<keyword id="KW-0067">ATP-binding</keyword>
<keyword id="KW-0143">Chaperone</keyword>
<keyword id="KW-0150">Chloroplast</keyword>
<keyword id="KW-0547">Nucleotide-binding</keyword>
<keyword id="KW-0934">Plastid</keyword>
<keyword id="KW-1185">Reference proteome</keyword>
<keyword id="KW-0677">Repeat</keyword>
<keyword id="KW-0809">Transit peptide</keyword>
<comment type="function">
    <text>May interact with a ClpP-like protease involved in degradation of denatured proteins in the chloroplast.</text>
</comment>
<comment type="subcellular location">
    <subcellularLocation>
        <location>Plastid</location>
        <location>Chloroplast</location>
    </subcellularLocation>
</comment>
<comment type="similarity">
    <text evidence="4">Belongs to the ClpA/ClpB family.</text>
</comment>
<dbReference type="EMBL" id="M32604">
    <property type="protein sequence ID" value="AAA34161.1"/>
    <property type="molecule type" value="Genomic_DNA"/>
</dbReference>
<dbReference type="PIR" id="B35905">
    <property type="entry name" value="B35905"/>
</dbReference>
<dbReference type="SMR" id="P31542"/>
<dbReference type="FunCoup" id="P31542">
    <property type="interactions" value="911"/>
</dbReference>
<dbReference type="STRING" id="4081.P31542"/>
<dbReference type="MEROPS" id="X20.001"/>
<dbReference type="PaxDb" id="4081-Solyc12g042060.1.1"/>
<dbReference type="eggNOG" id="KOG1051">
    <property type="taxonomic scope" value="Eukaryota"/>
</dbReference>
<dbReference type="InParanoid" id="P31542"/>
<dbReference type="Proteomes" id="UP000004994">
    <property type="component" value="Unplaced"/>
</dbReference>
<dbReference type="ExpressionAtlas" id="P31542">
    <property type="expression patterns" value="baseline and differential"/>
</dbReference>
<dbReference type="GO" id="GO:0009507">
    <property type="term" value="C:chloroplast"/>
    <property type="evidence" value="ECO:0007669"/>
    <property type="project" value="UniProtKB-SubCell"/>
</dbReference>
<dbReference type="GO" id="GO:0005524">
    <property type="term" value="F:ATP binding"/>
    <property type="evidence" value="ECO:0007669"/>
    <property type="project" value="UniProtKB-KW"/>
</dbReference>
<dbReference type="GO" id="GO:0016887">
    <property type="term" value="F:ATP hydrolysis activity"/>
    <property type="evidence" value="ECO:0007669"/>
    <property type="project" value="InterPro"/>
</dbReference>
<dbReference type="CDD" id="cd00009">
    <property type="entry name" value="AAA"/>
    <property type="match status" value="1"/>
</dbReference>
<dbReference type="CDD" id="cd19499">
    <property type="entry name" value="RecA-like_ClpB_Hsp104-like"/>
    <property type="match status" value="1"/>
</dbReference>
<dbReference type="FunFam" id="1.10.8.60:FF:000017">
    <property type="entry name" value="ATP-dependent chaperone ClpB"/>
    <property type="match status" value="1"/>
</dbReference>
<dbReference type="FunFam" id="1.10.8.60:FF:000011">
    <property type="entry name" value="ATP-dependent Clp protease ATP-binding subunit"/>
    <property type="match status" value="1"/>
</dbReference>
<dbReference type="FunFam" id="1.10.1780.10:FF:000004">
    <property type="entry name" value="ATP-dependent Clp protease ATP-binding subunit ClpC"/>
    <property type="match status" value="1"/>
</dbReference>
<dbReference type="FunFam" id="3.40.50.300:FF:000025">
    <property type="entry name" value="ATP-dependent Clp protease subunit"/>
    <property type="match status" value="1"/>
</dbReference>
<dbReference type="FunFam" id="3.40.50.300:FF:000010">
    <property type="entry name" value="Chaperone clpB 1, putative"/>
    <property type="match status" value="1"/>
</dbReference>
<dbReference type="Gene3D" id="1.10.8.60">
    <property type="match status" value="2"/>
</dbReference>
<dbReference type="Gene3D" id="1.10.1780.10">
    <property type="entry name" value="Clp, N-terminal domain"/>
    <property type="match status" value="1"/>
</dbReference>
<dbReference type="Gene3D" id="3.40.50.300">
    <property type="entry name" value="P-loop containing nucleotide triphosphate hydrolases"/>
    <property type="match status" value="2"/>
</dbReference>
<dbReference type="Gene3D" id="4.10.860.10">
    <property type="entry name" value="UVR domain"/>
    <property type="match status" value="1"/>
</dbReference>
<dbReference type="InterPro" id="IPR003593">
    <property type="entry name" value="AAA+_ATPase"/>
</dbReference>
<dbReference type="InterPro" id="IPR003959">
    <property type="entry name" value="ATPase_AAA_core"/>
</dbReference>
<dbReference type="InterPro" id="IPR019489">
    <property type="entry name" value="Clp_ATPase_C"/>
</dbReference>
<dbReference type="InterPro" id="IPR036628">
    <property type="entry name" value="Clp_N_dom_sf"/>
</dbReference>
<dbReference type="InterPro" id="IPR004176">
    <property type="entry name" value="Clp_R_dom"/>
</dbReference>
<dbReference type="InterPro" id="IPR001270">
    <property type="entry name" value="ClpA/B"/>
</dbReference>
<dbReference type="InterPro" id="IPR018368">
    <property type="entry name" value="ClpA/B_CS1"/>
</dbReference>
<dbReference type="InterPro" id="IPR028299">
    <property type="entry name" value="ClpA/B_CS2"/>
</dbReference>
<dbReference type="InterPro" id="IPR041546">
    <property type="entry name" value="ClpA/ClpB_AAA_lid"/>
</dbReference>
<dbReference type="InterPro" id="IPR050130">
    <property type="entry name" value="ClpA_ClpB"/>
</dbReference>
<dbReference type="InterPro" id="IPR027417">
    <property type="entry name" value="P-loop_NTPase"/>
</dbReference>
<dbReference type="InterPro" id="IPR001943">
    <property type="entry name" value="UVR_dom"/>
</dbReference>
<dbReference type="PANTHER" id="PTHR11638">
    <property type="entry name" value="ATP-DEPENDENT CLP PROTEASE"/>
    <property type="match status" value="1"/>
</dbReference>
<dbReference type="PANTHER" id="PTHR11638:SF155">
    <property type="entry name" value="CHAPERONE PROTEIN CLPC1, CHLOROPLASTIC-LIKE"/>
    <property type="match status" value="1"/>
</dbReference>
<dbReference type="Pfam" id="PF00004">
    <property type="entry name" value="AAA"/>
    <property type="match status" value="1"/>
</dbReference>
<dbReference type="Pfam" id="PF07724">
    <property type="entry name" value="AAA_2"/>
    <property type="match status" value="1"/>
</dbReference>
<dbReference type="Pfam" id="PF17871">
    <property type="entry name" value="AAA_lid_9"/>
    <property type="match status" value="1"/>
</dbReference>
<dbReference type="Pfam" id="PF02861">
    <property type="entry name" value="Clp_N"/>
    <property type="match status" value="2"/>
</dbReference>
<dbReference type="Pfam" id="PF10431">
    <property type="entry name" value="ClpB_D2-small"/>
    <property type="match status" value="1"/>
</dbReference>
<dbReference type="PRINTS" id="PR00300">
    <property type="entry name" value="CLPPROTEASEA"/>
</dbReference>
<dbReference type="SMART" id="SM00382">
    <property type="entry name" value="AAA"/>
    <property type="match status" value="2"/>
</dbReference>
<dbReference type="SMART" id="SM01086">
    <property type="entry name" value="ClpB_D2-small"/>
    <property type="match status" value="1"/>
</dbReference>
<dbReference type="SUPFAM" id="SSF81923">
    <property type="entry name" value="Double Clp-N motif"/>
    <property type="match status" value="1"/>
</dbReference>
<dbReference type="SUPFAM" id="SSF52540">
    <property type="entry name" value="P-loop containing nucleoside triphosphate hydrolases"/>
    <property type="match status" value="2"/>
</dbReference>
<dbReference type="PROSITE" id="PS51903">
    <property type="entry name" value="CLP_R"/>
    <property type="match status" value="1"/>
</dbReference>
<dbReference type="PROSITE" id="PS00870">
    <property type="entry name" value="CLPAB_1"/>
    <property type="match status" value="1"/>
</dbReference>
<dbReference type="PROSITE" id="PS00871">
    <property type="entry name" value="CLPAB_2"/>
    <property type="match status" value="1"/>
</dbReference>
<dbReference type="PROSITE" id="PS50151">
    <property type="entry name" value="UVR"/>
    <property type="match status" value="1"/>
</dbReference>
<gene>
    <name type="primary">CD4B</name>
</gene>
<organism>
    <name type="scientific">Solanum lycopersicum</name>
    <name type="common">Tomato</name>
    <name type="synonym">Lycopersicon esculentum</name>
    <dbReference type="NCBI Taxonomy" id="4081"/>
    <lineage>
        <taxon>Eukaryota</taxon>
        <taxon>Viridiplantae</taxon>
        <taxon>Streptophyta</taxon>
        <taxon>Embryophyta</taxon>
        <taxon>Tracheophyta</taxon>
        <taxon>Spermatophyta</taxon>
        <taxon>Magnoliopsida</taxon>
        <taxon>eudicotyledons</taxon>
        <taxon>Gunneridae</taxon>
        <taxon>Pentapetalae</taxon>
        <taxon>asterids</taxon>
        <taxon>lamiids</taxon>
        <taxon>Solanales</taxon>
        <taxon>Solanaceae</taxon>
        <taxon>Solanoideae</taxon>
        <taxon>Solaneae</taxon>
        <taxon>Solanum</taxon>
        <taxon>Solanum subgen. Lycopersicon</taxon>
    </lineage>
</organism>
<name>CLPAB_SOLLC</name>
<sequence>MARALVQSTSIPSSVAGERTTKFNGSGKTKRAVTMLCNAQSSSLTLRDFTGLRGCNAIDTLVRSGETLQSKVAAATYVRRPRGCRFVPKAMFERFTEKAIKVIMLAQEEARRLGHNFVGTEQILLGLIGEGTGIAAKVLKSMGINLKDARVEVEKIIGRGSGFVAVEIPFTPRAKRVLELSLEEARQLGHNYIGSEHLLLGLLREGEGVAARVLENLGADPSNIRTQVIRMVGESNEAVGASVGGGTSGQKMPTLEEYGTNLTKLAEEGKLDPVVGRQPQIERVTQILGRRTKNNPCLIGEPGVGKTAIAEGLAQRIANGDVPETIEGKKVITLDMGLLVAGTKYRGEFEERLKKLMEEIKQSDEIILFIDEVHTLIGAGAAEGAIDAANILKPALARGELQCIGATTLDEYRKHIEKDPALERRFQPVKVPEPTVDETIQILKGLRERYEIHHKLRYTDEDLVAAAQLSYQYISDRFLPDKAIDLIDEAGSRVRLRHAQLPEEAKELEKELRQITKEKNEAVRGQDFEKAGELRDREMDLKAQITALIDKNKEVSKAESEAADTGPLVTEADIQHIVSSWTGIPVEKVSTDESDRLLKMEETLHTRIIGQDEAVKAISRAIRRARVGLKNPNRPIASFIFSGPTGVGKSELAKALAAYYFGSEEAMIRLDMSEFMERHTVSKLIGSPPGYVGYTEGGQLTEAVRRRPYTVVLFDEIEKAHPDVFNMMLQILEDGRLTDSKGRTVDFKNTLLIMTSNVGSSVIEKGGRRIGFDLDLDEKDSSYNRIKSLVTEELKQYFRPEFLNRLDEMIVFRQLTKLEVKEIADIMLKEVFERLKVKEIELQVTERFRDRVVDEGYNPSYGARPLRRAIMRLLEDSMAEKMLANEIKEGDSVIVDVDSDGNVTVLNGSSGTPSDPAPEPIPV</sequence>
<protein>
    <recommendedName>
        <fullName>ATP-dependent Clp protease ATP-binding subunit ClpA homolog CD4B, chloroplastic</fullName>
    </recommendedName>
</protein>
<proteinExistence type="inferred from homology"/>
<evidence type="ECO:0000255" key="1"/>
<evidence type="ECO:0000255" key="2">
    <source>
        <dbReference type="PROSITE-ProRule" id="PRU00217"/>
    </source>
</evidence>
<evidence type="ECO:0000255" key="3">
    <source>
        <dbReference type="PROSITE-ProRule" id="PRU01251"/>
    </source>
</evidence>
<evidence type="ECO:0000305" key="4"/>
<reference key="1">
    <citation type="journal article" date="1990" name="Proc. Natl. Acad. Sci. U.S.A.">
        <title>Conservation of the regulatory subunit for the Clp ATP-dependent protease in prokaryotes and eukaryotes.</title>
        <authorList>
            <person name="Gottesman S."/>
            <person name="Squires C."/>
            <person name="Pichersky E."/>
            <person name="Carrington M."/>
            <person name="Hobbs M."/>
            <person name="Mattick J.S."/>
            <person name="Dalrymple B."/>
            <person name="Kuramitsu H."/>
            <person name="Shiroza T."/>
            <person name="Foster T."/>
            <person name="Clark W.P."/>
            <person name="Ross B."/>
            <person name="Squires C.L."/>
            <person name="Maurizi M.R."/>
        </authorList>
    </citation>
    <scope>NUCLEOTIDE SEQUENCE [GENOMIC DNA]</scope>
</reference>